<organism>
    <name type="scientific">Candida albicans (strain SC5314 / ATCC MYA-2876)</name>
    <name type="common">Yeast</name>
    <dbReference type="NCBI Taxonomy" id="237561"/>
    <lineage>
        <taxon>Eukaryota</taxon>
        <taxon>Fungi</taxon>
        <taxon>Dikarya</taxon>
        <taxon>Ascomycota</taxon>
        <taxon>Saccharomycotina</taxon>
        <taxon>Pichiomycetes</taxon>
        <taxon>Debaryomycetaceae</taxon>
        <taxon>Candida/Lodderomyces clade</taxon>
        <taxon>Candida</taxon>
    </lineage>
</organism>
<comment type="function">
    <text evidence="3">Catalyzes the hydrolytic deamination of cytosine to uracil or 5-methylcytosine to thymine. Is involved in the pyrimidine salvage pathway, which allows the cell to utilize cytosine for pyrimidine nucleotide synthesis.</text>
</comment>
<comment type="catalytic activity">
    <reaction evidence="1">
        <text>cytosine + H2O + H(+) = uracil + NH4(+)</text>
        <dbReference type="Rhea" id="RHEA:20605"/>
        <dbReference type="ChEBI" id="CHEBI:15377"/>
        <dbReference type="ChEBI" id="CHEBI:15378"/>
        <dbReference type="ChEBI" id="CHEBI:16040"/>
        <dbReference type="ChEBI" id="CHEBI:17568"/>
        <dbReference type="ChEBI" id="CHEBI:28938"/>
        <dbReference type="EC" id="3.5.4.1"/>
    </reaction>
</comment>
<comment type="cofactor">
    <cofactor evidence="1">
        <name>Zn(2+)</name>
        <dbReference type="ChEBI" id="CHEBI:29105"/>
    </cofactor>
</comment>
<comment type="pathway">
    <text evidence="6">Pyrimidine metabolism; UMP biosynthesis via salvage pathway; uracil from cytosine: step 1/1.</text>
</comment>
<comment type="subunit">
    <text evidence="1">Homodimer.</text>
</comment>
<comment type="subcellular location">
    <subcellularLocation>
        <location evidence="1">Cytoplasm</location>
    </subcellularLocation>
    <subcellularLocation>
        <location evidence="1">Nucleus</location>
    </subcellularLocation>
</comment>
<comment type="similarity">
    <text evidence="5">Belongs to the cytidine and deoxycytidylate deaminase family.</text>
</comment>
<feature type="chain" id="PRO_0000171701" description="Cytosine deaminase">
    <location>
        <begin position="1"/>
        <end position="150"/>
    </location>
</feature>
<feature type="domain" description="CMP/dCMP-type deaminase" evidence="2">
    <location>
        <begin position="3"/>
        <end position="121"/>
    </location>
</feature>
<feature type="active site" description="Proton donor" evidence="1">
    <location>
        <position position="57"/>
    </location>
</feature>
<feature type="binding site" evidence="1">
    <location>
        <position position="44"/>
    </location>
    <ligand>
        <name>substrate</name>
    </ligand>
</feature>
<feature type="binding site" evidence="1">
    <location>
        <position position="55"/>
    </location>
    <ligand>
        <name>Zn(2+)</name>
        <dbReference type="ChEBI" id="CHEBI:29105"/>
        <note>catalytic</note>
    </ligand>
</feature>
<feature type="binding site" evidence="1">
    <location>
        <position position="84"/>
    </location>
    <ligand>
        <name>Zn(2+)</name>
        <dbReference type="ChEBI" id="CHEBI:29105"/>
        <note>catalytic</note>
    </ligand>
</feature>
<feature type="binding site" evidence="1">
    <location>
        <position position="87"/>
    </location>
    <ligand>
        <name>Zn(2+)</name>
        <dbReference type="ChEBI" id="CHEBI:29105"/>
        <note>catalytic</note>
    </ligand>
</feature>
<feature type="binding site" evidence="1">
    <location>
        <position position="147"/>
    </location>
    <ligand>
        <name>substrate</name>
    </ligand>
</feature>
<accession>P78594</accession>
<accession>A0A1D8PPD4</accession>
<reference key="1">
    <citation type="journal article" date="1997" name="Curr. Genet.">
        <title>Characterization of the Saccharomyces cerevisiae FCY1 gene encoding cytosine deaminase and its homologue FCA1 of Candida albicans.</title>
        <authorList>
            <person name="Erbs P."/>
            <person name="Exinger F."/>
            <person name="Jund R."/>
        </authorList>
    </citation>
    <scope>NUCLEOTIDE SEQUENCE [GENOMIC DNA]</scope>
    <scope>FUNCTION</scope>
</reference>
<reference key="2">
    <citation type="journal article" date="2004" name="Proc. Natl. Acad. Sci. U.S.A.">
        <title>The diploid genome sequence of Candida albicans.</title>
        <authorList>
            <person name="Jones T."/>
            <person name="Federspiel N.A."/>
            <person name="Chibana H."/>
            <person name="Dungan J."/>
            <person name="Kalman S."/>
            <person name="Magee B.B."/>
            <person name="Newport G."/>
            <person name="Thorstenson Y.R."/>
            <person name="Agabian N."/>
            <person name="Magee P.T."/>
            <person name="Davis R.W."/>
            <person name="Scherer S."/>
        </authorList>
    </citation>
    <scope>NUCLEOTIDE SEQUENCE [LARGE SCALE GENOMIC DNA]</scope>
    <source>
        <strain>SC5314 / ATCC MYA-2876</strain>
    </source>
</reference>
<reference key="3">
    <citation type="journal article" date="2007" name="Genome Biol.">
        <title>Assembly of the Candida albicans genome into sixteen supercontigs aligned on the eight chromosomes.</title>
        <authorList>
            <person name="van het Hoog M."/>
            <person name="Rast T.J."/>
            <person name="Martchenko M."/>
            <person name="Grindle S."/>
            <person name="Dignard D."/>
            <person name="Hogues H."/>
            <person name="Cuomo C."/>
            <person name="Berriman M."/>
            <person name="Scherer S."/>
            <person name="Magee B.B."/>
            <person name="Whiteway M."/>
            <person name="Chibana H."/>
            <person name="Nantel A."/>
            <person name="Magee P.T."/>
        </authorList>
    </citation>
    <scope>GENOME REANNOTATION</scope>
    <source>
        <strain>SC5314 / ATCC MYA-2876</strain>
    </source>
</reference>
<reference key="4">
    <citation type="journal article" date="2013" name="Genome Biol.">
        <title>Assembly of a phased diploid Candida albicans genome facilitates allele-specific measurements and provides a simple model for repeat and indel structure.</title>
        <authorList>
            <person name="Muzzey D."/>
            <person name="Schwartz K."/>
            <person name="Weissman J.S."/>
            <person name="Sherlock G."/>
        </authorList>
    </citation>
    <scope>NUCLEOTIDE SEQUENCE [LARGE SCALE GENOMIC DNA]</scope>
    <scope>GENOME REANNOTATION</scope>
    <source>
        <strain>SC5314 / ATCC MYA-2876</strain>
    </source>
</reference>
<protein>
    <recommendedName>
        <fullName evidence="4">Cytosine deaminase</fullName>
        <ecNumber>3.5.4.1</ecNumber>
    </recommendedName>
    <alternativeName>
        <fullName>Cytosine aminohydrolase</fullName>
    </alternativeName>
</protein>
<keyword id="KW-0963">Cytoplasm</keyword>
<keyword id="KW-0378">Hydrolase</keyword>
<keyword id="KW-0479">Metal-binding</keyword>
<keyword id="KW-0539">Nucleus</keyword>
<keyword id="KW-1185">Reference proteome</keyword>
<keyword id="KW-0862">Zinc</keyword>
<proteinExistence type="inferred from homology"/>
<evidence type="ECO:0000250" key="1">
    <source>
        <dbReference type="UniProtKB" id="Q12178"/>
    </source>
</evidence>
<evidence type="ECO:0000255" key="2">
    <source>
        <dbReference type="PROSITE-ProRule" id="PRU01083"/>
    </source>
</evidence>
<evidence type="ECO:0000269" key="3">
    <source>
    </source>
</evidence>
<evidence type="ECO:0000303" key="4">
    <source>
    </source>
</evidence>
<evidence type="ECO:0000305" key="5"/>
<evidence type="ECO:0000305" key="6">
    <source>
    </source>
</evidence>
<name>FCA1_CANAL</name>
<dbReference type="EC" id="3.5.4.1"/>
<dbReference type="EMBL" id="U55194">
    <property type="protein sequence ID" value="AAC15782.1"/>
    <property type="molecule type" value="Genomic_DNA"/>
</dbReference>
<dbReference type="EMBL" id="CP017628">
    <property type="protein sequence ID" value="AOW30008.1"/>
    <property type="molecule type" value="Genomic_DNA"/>
</dbReference>
<dbReference type="RefSeq" id="XP_019330987.1">
    <property type="nucleotide sequence ID" value="XM_019475442.1"/>
</dbReference>
<dbReference type="SMR" id="P78594"/>
<dbReference type="FunCoup" id="P78594">
    <property type="interactions" value="158"/>
</dbReference>
<dbReference type="STRING" id="237561.A0A1D8PPD4"/>
<dbReference type="EnsemblFungi" id="C6_00620W_A-T">
    <property type="protein sequence ID" value="C6_00620W_A-T-p1"/>
    <property type="gene ID" value="C6_00620W_A"/>
</dbReference>
<dbReference type="GeneID" id="30515327"/>
<dbReference type="KEGG" id="cal:CAALFM_C600620WA"/>
<dbReference type="CGD" id="CAL0000189710">
    <property type="gene designation" value="FCA1"/>
</dbReference>
<dbReference type="VEuPathDB" id="FungiDB:C6_00620W_A"/>
<dbReference type="VEuPathDB" id="FungiDB:CAWG_05296"/>
<dbReference type="InParanoid" id="P78594"/>
<dbReference type="OrthoDB" id="408702at2759"/>
<dbReference type="PhylomeDB" id="P78594"/>
<dbReference type="UniPathway" id="UPA00574">
    <property type="reaction ID" value="UER00635"/>
</dbReference>
<dbReference type="Proteomes" id="UP000000559">
    <property type="component" value="Chromosome 6"/>
</dbReference>
<dbReference type="GO" id="GO:0005737">
    <property type="term" value="C:cytoplasm"/>
    <property type="evidence" value="ECO:0007669"/>
    <property type="project" value="UniProtKB-SubCell"/>
</dbReference>
<dbReference type="GO" id="GO:0062040">
    <property type="term" value="C:fungal biofilm matrix"/>
    <property type="evidence" value="ECO:0000314"/>
    <property type="project" value="CGD"/>
</dbReference>
<dbReference type="GO" id="GO:0005634">
    <property type="term" value="C:nucleus"/>
    <property type="evidence" value="ECO:0007669"/>
    <property type="project" value="UniProtKB-SubCell"/>
</dbReference>
<dbReference type="GO" id="GO:0004131">
    <property type="term" value="F:cytosine deaminase activity"/>
    <property type="evidence" value="ECO:0000316"/>
    <property type="project" value="CGD"/>
</dbReference>
<dbReference type="GO" id="GO:0008835">
    <property type="term" value="F:diaminohydroxyphosphoribosylaminopyrimidine deaminase activity"/>
    <property type="evidence" value="ECO:0000318"/>
    <property type="project" value="GO_Central"/>
</dbReference>
<dbReference type="GO" id="GO:0008270">
    <property type="term" value="F:zinc ion binding"/>
    <property type="evidence" value="ECO:0007669"/>
    <property type="project" value="InterPro"/>
</dbReference>
<dbReference type="GO" id="GO:0046087">
    <property type="term" value="P:cytidine metabolic process"/>
    <property type="evidence" value="ECO:0000318"/>
    <property type="project" value="GO_Central"/>
</dbReference>
<dbReference type="GO" id="GO:0019858">
    <property type="term" value="P:cytosine metabolic process"/>
    <property type="evidence" value="ECO:0000316"/>
    <property type="project" value="CGD"/>
</dbReference>
<dbReference type="GO" id="GO:0008655">
    <property type="term" value="P:pyrimidine-containing compound salvage"/>
    <property type="evidence" value="ECO:0000318"/>
    <property type="project" value="GO_Central"/>
</dbReference>
<dbReference type="GO" id="GO:0044206">
    <property type="term" value="P:UMP salvage"/>
    <property type="evidence" value="ECO:0007669"/>
    <property type="project" value="UniProtKB-UniPathway"/>
</dbReference>
<dbReference type="CDD" id="cd01285">
    <property type="entry name" value="nucleoside_deaminase"/>
    <property type="match status" value="1"/>
</dbReference>
<dbReference type="FunFam" id="3.40.140.10:FF:000016">
    <property type="entry name" value="Cytosine deaminase"/>
    <property type="match status" value="1"/>
</dbReference>
<dbReference type="Gene3D" id="3.40.140.10">
    <property type="entry name" value="Cytidine Deaminase, domain 2"/>
    <property type="match status" value="1"/>
</dbReference>
<dbReference type="InterPro" id="IPR016192">
    <property type="entry name" value="APOBEC/CMP_deaminase_Zn-bd"/>
</dbReference>
<dbReference type="InterPro" id="IPR002125">
    <property type="entry name" value="CMP_dCMP_dom"/>
</dbReference>
<dbReference type="InterPro" id="IPR016193">
    <property type="entry name" value="Cytidine_deaminase-like"/>
</dbReference>
<dbReference type="PANTHER" id="PTHR11079:SF190">
    <property type="entry name" value="CYTOSINE DEAMINASE"/>
    <property type="match status" value="1"/>
</dbReference>
<dbReference type="PANTHER" id="PTHR11079">
    <property type="entry name" value="CYTOSINE DEAMINASE FAMILY MEMBER"/>
    <property type="match status" value="1"/>
</dbReference>
<dbReference type="Pfam" id="PF00383">
    <property type="entry name" value="dCMP_cyt_deam_1"/>
    <property type="match status" value="1"/>
</dbReference>
<dbReference type="SUPFAM" id="SSF53927">
    <property type="entry name" value="Cytidine deaminase-like"/>
    <property type="match status" value="1"/>
</dbReference>
<dbReference type="PROSITE" id="PS00903">
    <property type="entry name" value="CYT_DCMP_DEAMINASES_1"/>
    <property type="match status" value="1"/>
</dbReference>
<dbReference type="PROSITE" id="PS51747">
    <property type="entry name" value="CYT_DCMP_DEAMINASES_2"/>
    <property type="match status" value="1"/>
</dbReference>
<sequence length="150" mass="16500">MTFDDKKGLQVALDQAKKSYSEGGIPIGSCIISSDDTVLGQGHNERIQKHSAILHGEMSALENAGRLPGKTYKDCTIYTTLSPCSMCTGAILLYGFKRVVMGENVNFLGNEKLLIENGVEVVNLNDQECIDLMAKFIKEKPQDWNEDIGE</sequence>
<gene>
    <name evidence="4" type="primary">FCA1</name>
    <name type="ORF">CAALFM_C600620WA</name>
</gene>